<organism>
    <name type="scientific">Leptospira biflexa serovar Patoc (strain Patoc 1 / Ames)</name>
    <dbReference type="NCBI Taxonomy" id="355278"/>
    <lineage>
        <taxon>Bacteria</taxon>
        <taxon>Pseudomonadati</taxon>
        <taxon>Spirochaetota</taxon>
        <taxon>Spirochaetia</taxon>
        <taxon>Leptospirales</taxon>
        <taxon>Leptospiraceae</taxon>
        <taxon>Leptospira</taxon>
    </lineage>
</organism>
<dbReference type="EMBL" id="CP000777">
    <property type="protein sequence ID" value="ABZ94413.1"/>
    <property type="molecule type" value="Genomic_DNA"/>
</dbReference>
<dbReference type="RefSeq" id="WP_002974021.1">
    <property type="nucleotide sequence ID" value="NC_010842.1"/>
</dbReference>
<dbReference type="SMR" id="B0SA43"/>
<dbReference type="GeneID" id="93343073"/>
<dbReference type="KEGG" id="lbf:LBF_1909"/>
<dbReference type="HOGENOM" id="CLU_144911_0_1_12"/>
<dbReference type="GO" id="GO:0005737">
    <property type="term" value="C:cytoplasm"/>
    <property type="evidence" value="ECO:0007669"/>
    <property type="project" value="UniProtKB-ARBA"/>
</dbReference>
<dbReference type="GO" id="GO:0015935">
    <property type="term" value="C:small ribosomal subunit"/>
    <property type="evidence" value="ECO:0007669"/>
    <property type="project" value="InterPro"/>
</dbReference>
<dbReference type="GO" id="GO:0019843">
    <property type="term" value="F:rRNA binding"/>
    <property type="evidence" value="ECO:0007669"/>
    <property type="project" value="UniProtKB-UniRule"/>
</dbReference>
<dbReference type="GO" id="GO:0003735">
    <property type="term" value="F:structural constituent of ribosome"/>
    <property type="evidence" value="ECO:0007669"/>
    <property type="project" value="InterPro"/>
</dbReference>
<dbReference type="GO" id="GO:0000028">
    <property type="term" value="P:ribosomal small subunit assembly"/>
    <property type="evidence" value="ECO:0007669"/>
    <property type="project" value="TreeGrafter"/>
</dbReference>
<dbReference type="GO" id="GO:0006412">
    <property type="term" value="P:translation"/>
    <property type="evidence" value="ECO:0007669"/>
    <property type="project" value="UniProtKB-UniRule"/>
</dbReference>
<dbReference type="FunFam" id="3.30.860.10:FF:000001">
    <property type="entry name" value="30S ribosomal protein S19"/>
    <property type="match status" value="1"/>
</dbReference>
<dbReference type="Gene3D" id="3.30.860.10">
    <property type="entry name" value="30s Ribosomal Protein S19, Chain A"/>
    <property type="match status" value="1"/>
</dbReference>
<dbReference type="HAMAP" id="MF_00531">
    <property type="entry name" value="Ribosomal_uS19"/>
    <property type="match status" value="1"/>
</dbReference>
<dbReference type="InterPro" id="IPR002222">
    <property type="entry name" value="Ribosomal_uS19"/>
</dbReference>
<dbReference type="InterPro" id="IPR005732">
    <property type="entry name" value="Ribosomal_uS19_bac-type"/>
</dbReference>
<dbReference type="InterPro" id="IPR020934">
    <property type="entry name" value="Ribosomal_uS19_CS"/>
</dbReference>
<dbReference type="InterPro" id="IPR023575">
    <property type="entry name" value="Ribosomal_uS19_SF"/>
</dbReference>
<dbReference type="NCBIfam" id="TIGR01050">
    <property type="entry name" value="rpsS_bact"/>
    <property type="match status" value="1"/>
</dbReference>
<dbReference type="PANTHER" id="PTHR11880">
    <property type="entry name" value="RIBOSOMAL PROTEIN S19P FAMILY MEMBER"/>
    <property type="match status" value="1"/>
</dbReference>
<dbReference type="PANTHER" id="PTHR11880:SF8">
    <property type="entry name" value="SMALL RIBOSOMAL SUBUNIT PROTEIN US19M"/>
    <property type="match status" value="1"/>
</dbReference>
<dbReference type="Pfam" id="PF00203">
    <property type="entry name" value="Ribosomal_S19"/>
    <property type="match status" value="1"/>
</dbReference>
<dbReference type="PIRSF" id="PIRSF002144">
    <property type="entry name" value="Ribosomal_S19"/>
    <property type="match status" value="1"/>
</dbReference>
<dbReference type="PRINTS" id="PR00975">
    <property type="entry name" value="RIBOSOMALS19"/>
</dbReference>
<dbReference type="SUPFAM" id="SSF54570">
    <property type="entry name" value="Ribosomal protein S19"/>
    <property type="match status" value="1"/>
</dbReference>
<dbReference type="PROSITE" id="PS00323">
    <property type="entry name" value="RIBOSOMAL_S19"/>
    <property type="match status" value="1"/>
</dbReference>
<feature type="chain" id="PRO_1000127995" description="Small ribosomal subunit protein uS19">
    <location>
        <begin position="1"/>
        <end position="92"/>
    </location>
</feature>
<protein>
    <recommendedName>
        <fullName evidence="1">Small ribosomal subunit protein uS19</fullName>
    </recommendedName>
    <alternativeName>
        <fullName evidence="2">30S ribosomal protein S19</fullName>
    </alternativeName>
</protein>
<comment type="function">
    <text evidence="1">Protein S19 forms a complex with S13 that binds strongly to the 16S ribosomal RNA.</text>
</comment>
<comment type="similarity">
    <text evidence="1">Belongs to the universal ribosomal protein uS19 family.</text>
</comment>
<proteinExistence type="inferred from homology"/>
<reference key="1">
    <citation type="journal article" date="2008" name="PLoS ONE">
        <title>Genome sequence of the saprophyte Leptospira biflexa provides insights into the evolution of Leptospira and the pathogenesis of leptospirosis.</title>
        <authorList>
            <person name="Picardeau M."/>
            <person name="Bulach D.M."/>
            <person name="Bouchier C."/>
            <person name="Zuerner R.L."/>
            <person name="Zidane N."/>
            <person name="Wilson P.J."/>
            <person name="Creno S."/>
            <person name="Kuczek E.S."/>
            <person name="Bommezzadri S."/>
            <person name="Davis J.C."/>
            <person name="McGrath A."/>
            <person name="Johnson M.J."/>
            <person name="Boursaux-Eude C."/>
            <person name="Seemann T."/>
            <person name="Rouy Z."/>
            <person name="Coppel R.L."/>
            <person name="Rood J.I."/>
            <person name="Lajus A."/>
            <person name="Davies J.K."/>
            <person name="Medigue C."/>
            <person name="Adler B."/>
        </authorList>
    </citation>
    <scope>NUCLEOTIDE SEQUENCE [LARGE SCALE GENOMIC DNA]</scope>
    <source>
        <strain>Patoc 1 / Ames</strain>
    </source>
</reference>
<keyword id="KW-0687">Ribonucleoprotein</keyword>
<keyword id="KW-0689">Ribosomal protein</keyword>
<keyword id="KW-0694">RNA-binding</keyword>
<keyword id="KW-0699">rRNA-binding</keyword>
<gene>
    <name evidence="1" type="primary">rpsS</name>
    <name type="ordered locus">LBF_1909</name>
</gene>
<name>RS19_LEPBA</name>
<evidence type="ECO:0000255" key="1">
    <source>
        <dbReference type="HAMAP-Rule" id="MF_00531"/>
    </source>
</evidence>
<evidence type="ECO:0000305" key="2"/>
<accession>B0SA43</accession>
<sequence length="92" mass="10412">MARSLKKGPFIDDHLMKKITKLNSEGKKTPFKSWSRRSTIYPDMIGHTVMIHNGKAFVPVYVNENMIGHKLGEFAPTRTFKGHGGDKKVAKK</sequence>